<name>RS13_ALTMD</name>
<accession>B4RT50</accession>
<accession>F2GAJ0</accession>
<feature type="chain" id="PRO_1000141211" description="Small ribosomal subunit protein uS13">
    <location>
        <begin position="1"/>
        <end position="118"/>
    </location>
</feature>
<feature type="region of interest" description="Disordered" evidence="2">
    <location>
        <begin position="94"/>
        <end position="118"/>
    </location>
</feature>
<reference key="1">
    <citation type="journal article" date="2008" name="ISME J.">
        <title>Comparative genomics of two ecotypes of the marine planktonic copiotroph Alteromonas macleodii suggests alternative lifestyles associated with different kinds of particulate organic matter.</title>
        <authorList>
            <person name="Ivars-Martinez E."/>
            <person name="Martin-Cuadrado A.-B."/>
            <person name="D'Auria G."/>
            <person name="Mira A."/>
            <person name="Ferriera S."/>
            <person name="Johnson J."/>
            <person name="Friedman R."/>
            <person name="Rodriguez-Valera F."/>
        </authorList>
    </citation>
    <scope>NUCLEOTIDE SEQUENCE [LARGE SCALE GENOMIC DNA]</scope>
    <source>
        <strain>DSM 17117 / CIP 110805 / LMG 28347 / Deep ecotype</strain>
    </source>
</reference>
<keyword id="KW-0687">Ribonucleoprotein</keyword>
<keyword id="KW-0689">Ribosomal protein</keyword>
<keyword id="KW-0694">RNA-binding</keyword>
<keyword id="KW-0699">rRNA-binding</keyword>
<keyword id="KW-0820">tRNA-binding</keyword>
<dbReference type="EMBL" id="CP001103">
    <property type="protein sequence ID" value="AEA98924.1"/>
    <property type="molecule type" value="Genomic_DNA"/>
</dbReference>
<dbReference type="RefSeq" id="WP_012519216.1">
    <property type="nucleotide sequence ID" value="NC_011138.3"/>
</dbReference>
<dbReference type="SMR" id="B4RT50"/>
<dbReference type="GeneID" id="78256521"/>
<dbReference type="KEGG" id="amc:MADE_1013950"/>
<dbReference type="HOGENOM" id="CLU_103849_1_2_6"/>
<dbReference type="Proteomes" id="UP000001870">
    <property type="component" value="Chromosome"/>
</dbReference>
<dbReference type="GO" id="GO:0005829">
    <property type="term" value="C:cytosol"/>
    <property type="evidence" value="ECO:0007669"/>
    <property type="project" value="TreeGrafter"/>
</dbReference>
<dbReference type="GO" id="GO:0015935">
    <property type="term" value="C:small ribosomal subunit"/>
    <property type="evidence" value="ECO:0007669"/>
    <property type="project" value="TreeGrafter"/>
</dbReference>
<dbReference type="GO" id="GO:0019843">
    <property type="term" value="F:rRNA binding"/>
    <property type="evidence" value="ECO:0007669"/>
    <property type="project" value="UniProtKB-UniRule"/>
</dbReference>
<dbReference type="GO" id="GO:0003735">
    <property type="term" value="F:structural constituent of ribosome"/>
    <property type="evidence" value="ECO:0007669"/>
    <property type="project" value="InterPro"/>
</dbReference>
<dbReference type="GO" id="GO:0000049">
    <property type="term" value="F:tRNA binding"/>
    <property type="evidence" value="ECO:0007669"/>
    <property type="project" value="UniProtKB-UniRule"/>
</dbReference>
<dbReference type="GO" id="GO:0006412">
    <property type="term" value="P:translation"/>
    <property type="evidence" value="ECO:0007669"/>
    <property type="project" value="UniProtKB-UniRule"/>
</dbReference>
<dbReference type="FunFam" id="1.10.8.50:FF:000001">
    <property type="entry name" value="30S ribosomal protein S13"/>
    <property type="match status" value="1"/>
</dbReference>
<dbReference type="FunFam" id="4.10.910.10:FF:000001">
    <property type="entry name" value="30S ribosomal protein S13"/>
    <property type="match status" value="1"/>
</dbReference>
<dbReference type="Gene3D" id="1.10.8.50">
    <property type="match status" value="1"/>
</dbReference>
<dbReference type="Gene3D" id="4.10.910.10">
    <property type="entry name" value="30s ribosomal protein s13, domain 2"/>
    <property type="match status" value="1"/>
</dbReference>
<dbReference type="HAMAP" id="MF_01315">
    <property type="entry name" value="Ribosomal_uS13"/>
    <property type="match status" value="1"/>
</dbReference>
<dbReference type="InterPro" id="IPR027437">
    <property type="entry name" value="Rbsml_uS13_C"/>
</dbReference>
<dbReference type="InterPro" id="IPR001892">
    <property type="entry name" value="Ribosomal_uS13"/>
</dbReference>
<dbReference type="InterPro" id="IPR010979">
    <property type="entry name" value="Ribosomal_uS13-like_H2TH"/>
</dbReference>
<dbReference type="InterPro" id="IPR019980">
    <property type="entry name" value="Ribosomal_uS13_bac-type"/>
</dbReference>
<dbReference type="InterPro" id="IPR018269">
    <property type="entry name" value="Ribosomal_uS13_CS"/>
</dbReference>
<dbReference type="NCBIfam" id="TIGR03631">
    <property type="entry name" value="uS13_bact"/>
    <property type="match status" value="1"/>
</dbReference>
<dbReference type="PANTHER" id="PTHR10871">
    <property type="entry name" value="30S RIBOSOMAL PROTEIN S13/40S RIBOSOMAL PROTEIN S18"/>
    <property type="match status" value="1"/>
</dbReference>
<dbReference type="PANTHER" id="PTHR10871:SF1">
    <property type="entry name" value="SMALL RIBOSOMAL SUBUNIT PROTEIN US13M"/>
    <property type="match status" value="1"/>
</dbReference>
<dbReference type="Pfam" id="PF00416">
    <property type="entry name" value="Ribosomal_S13"/>
    <property type="match status" value="1"/>
</dbReference>
<dbReference type="PIRSF" id="PIRSF002134">
    <property type="entry name" value="Ribosomal_S13"/>
    <property type="match status" value="1"/>
</dbReference>
<dbReference type="SUPFAM" id="SSF46946">
    <property type="entry name" value="S13-like H2TH domain"/>
    <property type="match status" value="1"/>
</dbReference>
<dbReference type="PROSITE" id="PS00646">
    <property type="entry name" value="RIBOSOMAL_S13_1"/>
    <property type="match status" value="1"/>
</dbReference>
<dbReference type="PROSITE" id="PS50159">
    <property type="entry name" value="RIBOSOMAL_S13_2"/>
    <property type="match status" value="1"/>
</dbReference>
<proteinExistence type="inferred from homology"/>
<evidence type="ECO:0000255" key="1">
    <source>
        <dbReference type="HAMAP-Rule" id="MF_01315"/>
    </source>
</evidence>
<evidence type="ECO:0000256" key="2">
    <source>
        <dbReference type="SAM" id="MobiDB-lite"/>
    </source>
</evidence>
<evidence type="ECO:0000305" key="3"/>
<sequence>MARIAGINIPEHKHAVIAIQAIYGVGPTRAKSICAGAGVAENTKIKELDEATIDKLRDEVAKFTVEGDLRREVSMSIKRLMDLGCFRGIRHRRSLPLRGQRTKTNARTRKGPRKPIKK</sequence>
<protein>
    <recommendedName>
        <fullName evidence="1">Small ribosomal subunit protein uS13</fullName>
    </recommendedName>
    <alternativeName>
        <fullName evidence="3">30S ribosomal protein S13</fullName>
    </alternativeName>
</protein>
<gene>
    <name evidence="1" type="primary">rpsM</name>
    <name type="ordered locus">MADE_1013950</name>
</gene>
<organism>
    <name type="scientific">Alteromonas mediterranea (strain DSM 17117 / CIP 110805 / LMG 28347 / Deep ecotype)</name>
    <dbReference type="NCBI Taxonomy" id="1774373"/>
    <lineage>
        <taxon>Bacteria</taxon>
        <taxon>Pseudomonadati</taxon>
        <taxon>Pseudomonadota</taxon>
        <taxon>Gammaproteobacteria</taxon>
        <taxon>Alteromonadales</taxon>
        <taxon>Alteromonadaceae</taxon>
        <taxon>Alteromonas/Salinimonas group</taxon>
        <taxon>Alteromonas</taxon>
    </lineage>
</organism>
<comment type="function">
    <text evidence="1">Located at the top of the head of the 30S subunit, it contacts several helices of the 16S rRNA. In the 70S ribosome it contacts the 23S rRNA (bridge B1a) and protein L5 of the 50S subunit (bridge B1b), connecting the 2 subunits; these bridges are implicated in subunit movement. Contacts the tRNAs in the A and P-sites.</text>
</comment>
<comment type="subunit">
    <text evidence="1">Part of the 30S ribosomal subunit. Forms a loose heterodimer with protein S19. Forms two bridges to the 50S subunit in the 70S ribosome.</text>
</comment>
<comment type="similarity">
    <text evidence="1">Belongs to the universal ribosomal protein uS13 family.</text>
</comment>